<comment type="function">
    <text evidence="9 13 22 23 25 26">Involved in late steps of the endosomal multivesicular bodies (MVB) pathway. Recognizes membrane-associated ESCRT-III assemblies and catalyzes their disassembly, possibly in combination with membrane fission. Redistributes the ESCRT-III components to the cytoplasm for further rounds of MVB sorting. MVBs contain intraluminal vesicles (ILVs) that are generated by invagination and scission from the limiting membrane of the endosome and mostly are delivered to lysosomes enabling degradation of membrane proteins, such as stimulated growth factor receptors, lysosomal enzymes and lipids. It is required for proper accomplishment of various processes including the regulation of endosome size, primary cilium organization, mitotic spindle organization, chromosome segregation, and nuclear envelope sealing and spindle disassembly during anaphase (PubMed:33186545). Involved in cytokinesis: retained at the midbody by ZFYVE19/ANCHR and CHMP4C until abscission checkpoint signaling is terminated at late cytokinesis. It is then released following dephosphorylation of CHMP4C, leading to abscission (PubMed:24814515). VPS4A/B are required for the exosomal release of SDCBP, CD63 and syndecan (PubMed:22660413). Critical for normal erythroblast cytokinesis and correct erythropoiesis (PubMed:33186543).</text>
</comment>
<comment type="function">
    <text evidence="10">(Microbial infection) In conjunction with the ESCRT machinery also appears to function in topologically equivalent membrane fission events, such as the terminal stages of cytokinesis and enveloped virus budding (HIV-1 and other lentiviruses).</text>
</comment>
<comment type="catalytic activity">
    <reaction evidence="2">
        <text>ATP + H2O = ADP + phosphate + H(+)</text>
        <dbReference type="Rhea" id="RHEA:13065"/>
        <dbReference type="ChEBI" id="CHEBI:15377"/>
        <dbReference type="ChEBI" id="CHEBI:15378"/>
        <dbReference type="ChEBI" id="CHEBI:30616"/>
        <dbReference type="ChEBI" id="CHEBI:43474"/>
        <dbReference type="ChEBI" id="CHEBI:456216"/>
        <dbReference type="EC" id="3.6.4.6"/>
    </reaction>
</comment>
<comment type="subunit">
    <text evidence="1 8 9 11 12 14 16 17 18 19 20 21 23">Proposed to be monomeric or homodimeric in nucleotide-free form and to oligomerize upon binding to ATP to form two stacked hexameric or heptameric rings with a central pore through which ESCRT-III substrates are translocated in an ATP-dependent manner (By similarity). Interacts with CHMP1A, CHMP1B, CHMP2A, CHMP2B, CHMP3, CHMP4A, CHMP4B, CHMP4C and CHMP6. Interacts with VPS4B; the interaction suggests a heteromeric assembly with VPS4B. Interacts with SPAST. Interacts with IST1. Interacts with ZFYVE19/ANCHR; leading to retain it at midbody.</text>
</comment>
<comment type="interaction">
    <interactant intactId="EBI-1171942">
        <id>Q9UN37</id>
    </interactant>
    <interactant intactId="EBI-349854">
        <id>P13569</id>
        <label>CFTR</label>
    </interactant>
    <organismsDiffer>false</organismsDiffer>
    <experiments>9</experiments>
</comment>
<comment type="interaction">
    <interactant intactId="EBI-1171942">
        <id>Q9UN37</id>
    </interactant>
    <interactant intactId="EBI-1057156">
        <id>Q9HD42</id>
        <label>CHMP1A</label>
    </interactant>
    <organismsDiffer>false</organismsDiffer>
    <experiments>8</experiments>
</comment>
<comment type="interaction">
    <interactant intactId="EBI-1171942">
        <id>Q9UN37</id>
    </interactant>
    <interactant intactId="EBI-15663713">
        <id>Q9HD42-1</id>
        <label>CHMP1A</label>
    </interactant>
    <organismsDiffer>false</organismsDiffer>
    <experiments>2</experiments>
</comment>
<comment type="interaction">
    <interactant intactId="EBI-1171942">
        <id>Q9UN37</id>
    </interactant>
    <interactant intactId="EBI-2118090">
        <id>Q7LBR1</id>
        <label>CHMP1B</label>
    </interactant>
    <organismsDiffer>false</organismsDiffer>
    <experiments>4</experiments>
</comment>
<comment type="interaction">
    <interactant intactId="EBI-1171942">
        <id>Q9UN37</id>
    </interactant>
    <interactant intactId="EBI-2692789">
        <id>O43633</id>
        <label>CHMP2A</label>
    </interactant>
    <organismsDiffer>false</organismsDiffer>
    <experiments>4</experiments>
</comment>
<comment type="interaction">
    <interactant intactId="EBI-1171942">
        <id>Q9UN37</id>
    </interactant>
    <interactant intactId="EBI-10192241">
        <id>O95833</id>
        <label>CLIC3</label>
    </interactant>
    <organismsDiffer>false</organismsDiffer>
    <experiments>3</experiments>
</comment>
<comment type="interaction">
    <interactant intactId="EBI-1171942">
        <id>Q9UN37</id>
    </interactant>
    <interactant intactId="EBI-16106990">
        <id>Q96K21-1</id>
        <label>ZFYVE19</label>
    </interactant>
    <organismsDiffer>false</organismsDiffer>
    <experiments>3</experiments>
</comment>
<comment type="subcellular location">
    <subcellularLocation>
        <location evidence="4">Late endosome membrane</location>
        <topology evidence="4">Peripheral membrane protein</topology>
    </subcellularLocation>
    <subcellularLocation>
        <location evidence="23">Midbody</location>
    </subcellularLocation>
    <subcellularLocation>
        <location evidence="25">Cytoplasm</location>
        <location evidence="25">Cytoskeleton</location>
        <location evidence="25">Spindle</location>
    </subcellularLocation>
    <text evidence="23">Membrane-associated in the prevacuolar endosomal compartment. Localizes to the midbody of dividing cells, interaction with ZFYVE19/ANCHR mediates retention at midbody (PubMed:24814515). Localized in two distinct rings on either side of the Flemming body.</text>
</comment>
<comment type="tissue specificity">
    <text evidence="7 9">Ubiquitously expressed.</text>
</comment>
<comment type="domain">
    <text evidence="2">The MIT domain serves as an adapter for ESCRT-III proteins. It forms an asymmetric three-helix bundle that binds amphipathic MIM (MIT interacting motif) helices along the groove between MIT helices 2 and 3 present in a subset of ESCRT-III proteins thus establishing the canonical MIM-MIT interaction. In an extended conformation along the groove between helices 1 and 3, also binds to a type-2 MIT interacting motif (MIM2).</text>
</comment>
<comment type="disease" evidence="25 26 27">
    <disease id="DI-06081">
        <name>CIMDAG syndrome</name>
        <acronym>CIMDAG</acronym>
        <description>An autosomal dominant syndrome characterized by global developmental delay, severely impaired intellectual development, poor or absent speech, microcephaly, growth retardation, poor motor skills with inability to walk, hypotonia and spasticity, and cataracts. Cerebral and cerebellar atrophy, thin corpus callosum, and delayed myelination are apparent on brain imaging. Affected individuals show hematologic abnormalities mostly consistent with congenital dyserythropoietic anemia.</description>
        <dbReference type="MIM" id="619273"/>
    </disease>
    <text>The disease may be caused by variants affecting the gene represented in this entry.</text>
</comment>
<comment type="similarity">
    <text evidence="5">Belongs to the AAA ATPase family.</text>
</comment>
<comment type="sequence caution" evidence="28">
    <conflict type="frameshift">
        <sequence resource="EMBL-CDS" id="AAL75948"/>
    </conflict>
</comment>
<reference evidence="28 33" key="1">
    <citation type="journal article" date="2001" name="J. Mol. Biol.">
        <title>Mammalian cells express two VPS4 proteins both of which are involved in intracellular protein trafficking.</title>
        <authorList>
            <person name="Scheuring S."/>
            <person name="Roehricht R.A."/>
            <person name="Schoening-Burkhardt B."/>
            <person name="Beyer A."/>
            <person name="Mueller S."/>
            <person name="Abts H.F."/>
            <person name="Koehrer K."/>
        </authorList>
    </citation>
    <scope>NUCLEOTIDE SEQUENCE [MRNA]</scope>
    <scope>FUNCTION</scope>
    <scope>SUBCELLULAR LOCATION</scope>
    <scope>TISSUE SPECIFICITY</scope>
    <scope>INTERACTION WITH VPS4B</scope>
    <scope>MUTAGENESIS OF GLU-228</scope>
    <source>
        <tissue>Keratinocyte</tissue>
    </source>
</reference>
<reference evidence="31" key="2">
    <citation type="journal article" date="2003" name="Gene">
        <title>Comparative sequence and expression analyses of four mammalian VPS4 genes.</title>
        <authorList>
            <person name="Beyer A."/>
            <person name="Scheuring S."/>
            <person name="Mueller S."/>
            <person name="Mincheva A."/>
            <person name="Lichter P."/>
            <person name="Koehrer K."/>
        </authorList>
    </citation>
    <scope>NUCLEOTIDE SEQUENCE [GENOMIC DNA]</scope>
</reference>
<reference evidence="34" key="3">
    <citation type="submission" date="1999-03" db="EMBL/GenBank/DDBJ databases">
        <title>Cloning of a new human cDNA homologous to Homo sapiens SKD1 protein.</title>
        <authorList>
            <person name="Ding J.B."/>
            <person name="Yu L."/>
            <person name="Zhao S.Y."/>
        </authorList>
    </citation>
    <scope>NUCLEOTIDE SEQUENCE [MRNA]</scope>
</reference>
<reference evidence="34" key="4">
    <citation type="submission" date="1999-06" db="EMBL/GenBank/DDBJ databases">
        <title>Isolation of a homolog of SKD1.</title>
        <authorList>
            <person name="Patejunas G."/>
        </authorList>
    </citation>
    <scope>NUCLEOTIDE SEQUENCE [MRNA]</scope>
    <source>
        <tissue>Heart</tissue>
    </source>
</reference>
<reference evidence="30" key="5">
    <citation type="journal article" date="2000" name="Proc. Natl. Acad. Sci. U.S.A.">
        <title>Gene expression profiling in the human hypothalamus-pituitary-adrenal axis and full-length cDNA cloning.</title>
        <authorList>
            <person name="Hu R.-M."/>
            <person name="Han Z.-G."/>
            <person name="Song H.-D."/>
            <person name="Peng Y.-D."/>
            <person name="Huang Q.-H."/>
            <person name="Ren S.-X."/>
            <person name="Gu Y.-J."/>
            <person name="Huang C.-H."/>
            <person name="Li Y.-B."/>
            <person name="Jiang C.-L."/>
            <person name="Fu G."/>
            <person name="Zhang Q.-H."/>
            <person name="Gu B.-W."/>
            <person name="Dai M."/>
            <person name="Mao Y.-F."/>
            <person name="Gao G.-F."/>
            <person name="Rong R."/>
            <person name="Ye M."/>
            <person name="Zhou J."/>
            <person name="Xu S.-H."/>
            <person name="Gu J."/>
            <person name="Shi J.-X."/>
            <person name="Jin W.-R."/>
            <person name="Zhang C.-K."/>
            <person name="Wu T.-M."/>
            <person name="Huang G.-Y."/>
            <person name="Chen Z."/>
            <person name="Chen M.-D."/>
            <person name="Chen J.-L."/>
        </authorList>
    </citation>
    <scope>NUCLEOTIDE SEQUENCE [LARGE SCALE MRNA]</scope>
    <source>
        <tissue evidence="30">Hypothalamus</tissue>
    </source>
</reference>
<reference key="6">
    <citation type="journal article" date="2004" name="Nat. Genet.">
        <title>Complete sequencing and characterization of 21,243 full-length human cDNAs.</title>
        <authorList>
            <person name="Ota T."/>
            <person name="Suzuki Y."/>
            <person name="Nishikawa T."/>
            <person name="Otsuki T."/>
            <person name="Sugiyama T."/>
            <person name="Irie R."/>
            <person name="Wakamatsu A."/>
            <person name="Hayashi K."/>
            <person name="Sato H."/>
            <person name="Nagai K."/>
            <person name="Kimura K."/>
            <person name="Makita H."/>
            <person name="Sekine M."/>
            <person name="Obayashi M."/>
            <person name="Nishi T."/>
            <person name="Shibahara T."/>
            <person name="Tanaka T."/>
            <person name="Ishii S."/>
            <person name="Yamamoto J."/>
            <person name="Saito K."/>
            <person name="Kawai Y."/>
            <person name="Isono Y."/>
            <person name="Nakamura Y."/>
            <person name="Nagahari K."/>
            <person name="Murakami K."/>
            <person name="Yasuda T."/>
            <person name="Iwayanagi T."/>
            <person name="Wagatsuma M."/>
            <person name="Shiratori A."/>
            <person name="Sudo H."/>
            <person name="Hosoiri T."/>
            <person name="Kaku Y."/>
            <person name="Kodaira H."/>
            <person name="Kondo H."/>
            <person name="Sugawara M."/>
            <person name="Takahashi M."/>
            <person name="Kanda K."/>
            <person name="Yokoi T."/>
            <person name="Furuya T."/>
            <person name="Kikkawa E."/>
            <person name="Omura Y."/>
            <person name="Abe K."/>
            <person name="Kamihara K."/>
            <person name="Katsuta N."/>
            <person name="Sato K."/>
            <person name="Tanikawa M."/>
            <person name="Yamazaki M."/>
            <person name="Ninomiya K."/>
            <person name="Ishibashi T."/>
            <person name="Yamashita H."/>
            <person name="Murakawa K."/>
            <person name="Fujimori K."/>
            <person name="Tanai H."/>
            <person name="Kimata M."/>
            <person name="Watanabe M."/>
            <person name="Hiraoka S."/>
            <person name="Chiba Y."/>
            <person name="Ishida S."/>
            <person name="Ono Y."/>
            <person name="Takiguchi S."/>
            <person name="Watanabe S."/>
            <person name="Yosida M."/>
            <person name="Hotuta T."/>
            <person name="Kusano J."/>
            <person name="Kanehori K."/>
            <person name="Takahashi-Fujii A."/>
            <person name="Hara H."/>
            <person name="Tanase T.-O."/>
            <person name="Nomura Y."/>
            <person name="Togiya S."/>
            <person name="Komai F."/>
            <person name="Hara R."/>
            <person name="Takeuchi K."/>
            <person name="Arita M."/>
            <person name="Imose N."/>
            <person name="Musashino K."/>
            <person name="Yuuki H."/>
            <person name="Oshima A."/>
            <person name="Sasaki N."/>
            <person name="Aotsuka S."/>
            <person name="Yoshikawa Y."/>
            <person name="Matsunawa H."/>
            <person name="Ichihara T."/>
            <person name="Shiohata N."/>
            <person name="Sano S."/>
            <person name="Moriya S."/>
            <person name="Momiyama H."/>
            <person name="Satoh N."/>
            <person name="Takami S."/>
            <person name="Terashima Y."/>
            <person name="Suzuki O."/>
            <person name="Nakagawa S."/>
            <person name="Senoh A."/>
            <person name="Mizoguchi H."/>
            <person name="Goto Y."/>
            <person name="Shimizu F."/>
            <person name="Wakebe H."/>
            <person name="Hishigaki H."/>
            <person name="Watanabe T."/>
            <person name="Sugiyama A."/>
            <person name="Takemoto M."/>
            <person name="Kawakami B."/>
            <person name="Yamazaki M."/>
            <person name="Watanabe K."/>
            <person name="Kumagai A."/>
            <person name="Itakura S."/>
            <person name="Fukuzumi Y."/>
            <person name="Fujimori Y."/>
            <person name="Komiyama M."/>
            <person name="Tashiro H."/>
            <person name="Tanigami A."/>
            <person name="Fujiwara T."/>
            <person name="Ono T."/>
            <person name="Yamada K."/>
            <person name="Fujii Y."/>
            <person name="Ozaki K."/>
            <person name="Hirao M."/>
            <person name="Ohmori Y."/>
            <person name="Kawabata A."/>
            <person name="Hikiji T."/>
            <person name="Kobatake N."/>
            <person name="Inagaki H."/>
            <person name="Ikema Y."/>
            <person name="Okamoto S."/>
            <person name="Okitani R."/>
            <person name="Kawakami T."/>
            <person name="Noguchi S."/>
            <person name="Itoh T."/>
            <person name="Shigeta K."/>
            <person name="Senba T."/>
            <person name="Matsumura K."/>
            <person name="Nakajima Y."/>
            <person name="Mizuno T."/>
            <person name="Morinaga M."/>
            <person name="Sasaki M."/>
            <person name="Togashi T."/>
            <person name="Oyama M."/>
            <person name="Hata H."/>
            <person name="Watanabe M."/>
            <person name="Komatsu T."/>
            <person name="Mizushima-Sugano J."/>
            <person name="Satoh T."/>
            <person name="Shirai Y."/>
            <person name="Takahashi Y."/>
            <person name="Nakagawa K."/>
            <person name="Okumura K."/>
            <person name="Nagase T."/>
            <person name="Nomura N."/>
            <person name="Kikuchi H."/>
            <person name="Masuho Y."/>
            <person name="Yamashita R."/>
            <person name="Nakai K."/>
            <person name="Yada T."/>
            <person name="Nakamura Y."/>
            <person name="Ohara O."/>
            <person name="Isogai T."/>
            <person name="Sugano S."/>
        </authorList>
    </citation>
    <scope>NUCLEOTIDE SEQUENCE [LARGE SCALE MRNA]</scope>
    <source>
        <tissue>Kidney</tissue>
    </source>
</reference>
<reference evidence="34" key="7">
    <citation type="submission" date="2005-07" db="EMBL/GenBank/DDBJ databases">
        <authorList>
            <person name="Mural R.J."/>
            <person name="Istrail S."/>
            <person name="Sutton G.G."/>
            <person name="Florea L."/>
            <person name="Halpern A.L."/>
            <person name="Mobarry C.M."/>
            <person name="Lippert R."/>
            <person name="Walenz B."/>
            <person name="Shatkay H."/>
            <person name="Dew I."/>
            <person name="Miller J.R."/>
            <person name="Flanigan M.J."/>
            <person name="Edwards N.J."/>
            <person name="Bolanos R."/>
            <person name="Fasulo D."/>
            <person name="Halldorsson B.V."/>
            <person name="Hannenhalli S."/>
            <person name="Turner R."/>
            <person name="Yooseph S."/>
            <person name="Lu F."/>
            <person name="Nusskern D.R."/>
            <person name="Shue B.C."/>
            <person name="Zheng X.H."/>
            <person name="Zhong F."/>
            <person name="Delcher A.L."/>
            <person name="Huson D.H."/>
            <person name="Kravitz S.A."/>
            <person name="Mouchard L."/>
            <person name="Reinert K."/>
            <person name="Remington K.A."/>
            <person name="Clark A.G."/>
            <person name="Waterman M.S."/>
            <person name="Eichler E.E."/>
            <person name="Adams M.D."/>
            <person name="Hunkapiller M.W."/>
            <person name="Myers E.W."/>
            <person name="Venter J.C."/>
        </authorList>
    </citation>
    <scope>NUCLEOTIDE SEQUENCE [LARGE SCALE GENOMIC DNA]</scope>
</reference>
<reference evidence="32" key="8">
    <citation type="journal article" date="2004" name="Genome Res.">
        <title>The status, quality, and expansion of the NIH full-length cDNA project: the Mammalian Gene Collection (MGC).</title>
        <authorList>
            <consortium name="The MGC Project Team"/>
        </authorList>
    </citation>
    <scope>NUCLEOTIDE SEQUENCE [LARGE SCALE MRNA]</scope>
</reference>
<reference evidence="28 29" key="9">
    <citation type="journal article" date="2000" name="Mol. Biol. Cell">
        <title>ATPase-defective mammalian VPS4 localizes to aberrant endosomes and impairs cholesterol trafficking.</title>
        <authorList>
            <person name="Bishop N."/>
            <person name="Woodman P."/>
        </authorList>
    </citation>
    <scope>NUCLEOTIDE SEQUENCE [MRNA] OF 6-437</scope>
    <scope>SUBCELLULAR LOCATION</scope>
    <scope>TISSUE SPECIFICITY</scope>
    <scope>MUTAGENESIS OF LYS-173 AND GLU-228</scope>
    <source>
        <tissue evidence="29">Brain</tissue>
    </source>
</reference>
<reference key="10">
    <citation type="journal article" date="2001" name="Cell">
        <title>Tsg101 and the vacuolar protein sorting pathway are essential for HIV-1 budding.</title>
        <authorList>
            <person name="Garrus J.E."/>
            <person name="von Schwedler U.K."/>
            <person name="Pornillos O.W."/>
            <person name="Morham S.G."/>
            <person name="Zavitz K.H."/>
            <person name="Wang H.E."/>
            <person name="Wettstein D.A."/>
            <person name="Stray K.M."/>
            <person name="Cote M."/>
            <person name="Rich R.L."/>
            <person name="Myszka D.G."/>
            <person name="Sundquist W.I."/>
        </authorList>
    </citation>
    <scope>FUNCTION IN VIRUS RELEASE</scope>
    <scope>MUTAGENESIS OF LYS-173 AND GLU-228</scope>
</reference>
<reference evidence="28" key="11">
    <citation type="journal article" date="2001" name="J. Cell Sci.">
        <title>CHMP1 functions as a member of a newly defined family of vesicle trafficking proteins.</title>
        <authorList>
            <person name="Howard T.L."/>
            <person name="Stauffer D.R."/>
            <person name="Degnin C.R."/>
            <person name="Hollenberg S.M."/>
        </authorList>
    </citation>
    <scope>INTERACTION WITH CHMP1A</scope>
    <scope>MUTAGENESIS OF GLU-228</scope>
</reference>
<reference evidence="28" key="12">
    <citation type="journal article" date="2003" name="Cell">
        <title>The protein network of HIV budding.</title>
        <authorList>
            <person name="von Schwedler U.K."/>
            <person name="Stuchell M."/>
            <person name="Mueller B."/>
            <person name="Ward D.M."/>
            <person name="Chung H.-Y."/>
            <person name="Morita E."/>
            <person name="Wang H.E."/>
            <person name="Davis T."/>
            <person name="He G.P."/>
            <person name="Cimbora D.M."/>
            <person name="Scott A."/>
            <person name="Kraeusslich H.-G."/>
            <person name="Kaplan J."/>
            <person name="Morham S.G."/>
            <person name="Sundquist W.I."/>
        </authorList>
    </citation>
    <scope>INTERACTION WITH CHMP1A; CHMP1B; CHMP2A; CHMP4A; CHMP4B; CHMP4C AND CHMP6</scope>
</reference>
<reference key="13">
    <citation type="journal article" date="2003" name="Proc. Natl. Acad. Sci. U.S.A.">
        <title>Divergent retroviral late-budding domains recruit vacuolar protein sorting factors by using alternative adaptor proteins.</title>
        <authorList>
            <person name="Martin-Serrano J."/>
            <person name="Yarovoy A."/>
            <person name="Perez-Caballero D."/>
            <person name="Bieniasz P.D."/>
        </authorList>
    </citation>
    <scope>INTERACTION WITH CHMP1A; CHMP1B; CHMP2A; CHMP2B AND CHMP3</scope>
</reference>
<reference key="14">
    <citation type="journal article" date="2003" name="Proc. Natl. Acad. Sci. U.S.A.">
        <authorList>
            <person name="Martin-Serrano J."/>
            <person name="Yarovoy A."/>
            <person name="Perez-Caballero D."/>
            <person name="Bieniasz P.D."/>
        </authorList>
    </citation>
    <scope>ERRATUM OF PUBMED:14519844</scope>
</reference>
<reference evidence="28" key="15">
    <citation type="journal article" date="2004" name="J. Cell Sci.">
        <title>ATPase-deficient hVPS4 impairs formation of internal endosomal vesicles and stabilizes bilayered clathrin coats on endosomal vacuoles.</title>
        <authorList>
            <person name="Sachse M."/>
            <person name="Strous G.J."/>
            <person name="Klumperman J."/>
        </authorList>
    </citation>
    <scope>FUNCTION</scope>
    <scope>MUTAGENESIS OF GLU-228</scope>
</reference>
<reference key="16">
    <citation type="journal article" date="2005" name="EMBO J.">
        <title>Structural and mechanistic studies of VPS4 proteins.</title>
        <authorList>
            <person name="Scott A."/>
            <person name="Chung H.Y."/>
            <person name="Gonciarz-Swiatek M."/>
            <person name="Hill G.C."/>
            <person name="Whitby F.G."/>
            <person name="Gaspar J."/>
            <person name="Holton J.M."/>
            <person name="Viswanathan R."/>
            <person name="Ghaffarian S."/>
            <person name="Hill C.P."/>
            <person name="Sundquist W.I."/>
        </authorList>
    </citation>
    <scope>MUTAGENESIS OF 201-TRP-LEU-202 AND GLY-203</scope>
</reference>
<reference key="17">
    <citation type="journal article" date="2007" name="EMBO J.">
        <title>Human ESCRT and ALIX proteins interact with proteins of the midbody and function in cytokinesis.</title>
        <authorList>
            <person name="Morita E."/>
            <person name="Sandrin V."/>
            <person name="Chung H.Y."/>
            <person name="Morham S.G."/>
            <person name="Gygi S.P."/>
            <person name="Rodesch C.K."/>
            <person name="Sundquist W.I."/>
        </authorList>
    </citation>
    <scope>SUBCELLULAR LOCATION</scope>
</reference>
<reference key="18">
    <citation type="journal article" date="2008" name="Nat. Struct. Mol. Biol.">
        <title>Structural basis for midbody targeting of spastin by the ESCRT-III protein CHMP1B.</title>
        <authorList>
            <person name="Yang D."/>
            <person name="Rismanchi N."/>
            <person name="Renvoise B."/>
            <person name="Lippincott-Schwartz J."/>
            <person name="Blackstone C."/>
            <person name="Hurley J.H."/>
        </authorList>
    </citation>
    <scope>INTERACTION WITH SPAST</scope>
</reference>
<reference key="19">
    <citation type="journal article" date="2009" name="Mol. Biol. Cell">
        <title>Essential role of hIST1 in cytokinesis.</title>
        <authorList>
            <person name="Agromayor M."/>
            <person name="Carlton J.G."/>
            <person name="Phelan J.P."/>
            <person name="Matthews D.R."/>
            <person name="Carlin L.M."/>
            <person name="Ameer-Beg S."/>
            <person name="Bowers K."/>
            <person name="Martin-Serrano J."/>
        </authorList>
    </citation>
    <scope>INTERACTION WITH IST1</scope>
    <scope>MUTAGENESIS OF LEU-64</scope>
</reference>
<reference key="20">
    <citation type="journal article" date="2009" name="Mol. Biol. Cell">
        <title>Biochemical analyses of human IST1 and its function in cytokinesis.</title>
        <authorList>
            <person name="Bajorek M."/>
            <person name="Morita E."/>
            <person name="Skalicky J.J."/>
            <person name="Morham S.G."/>
            <person name="Babst M."/>
            <person name="Sundquist W.I."/>
        </authorList>
    </citation>
    <scope>INTERACTION WITH IST1</scope>
    <scope>MUTAGENESIS OF VAL-13 AND LEU-64</scope>
</reference>
<reference key="21">
    <citation type="journal article" date="2009" name="Science">
        <title>Lysine acetylation targets protein complexes and co-regulates major cellular functions.</title>
        <authorList>
            <person name="Choudhary C."/>
            <person name="Kumar C."/>
            <person name="Gnad F."/>
            <person name="Nielsen M.L."/>
            <person name="Rehman M."/>
            <person name="Walther T.C."/>
            <person name="Olsen J.V."/>
            <person name="Mann M."/>
        </authorList>
    </citation>
    <scope>ACETYLATION [LARGE SCALE ANALYSIS] AT LYS-8</scope>
    <scope>IDENTIFICATION BY MASS SPECTROMETRY [LARGE SCALE ANALYSIS]</scope>
</reference>
<reference key="22">
    <citation type="journal article" date="2011" name="BMC Syst. Biol.">
        <title>Initial characterization of the human central proteome.</title>
        <authorList>
            <person name="Burkard T.R."/>
            <person name="Planyavsky M."/>
            <person name="Kaupe I."/>
            <person name="Breitwieser F.P."/>
            <person name="Buerckstuemmer T."/>
            <person name="Bennett K.L."/>
            <person name="Superti-Furga G."/>
            <person name="Colinge J."/>
        </authorList>
    </citation>
    <scope>IDENTIFICATION BY MASS SPECTROMETRY [LARGE SCALE ANALYSIS]</scope>
</reference>
<reference key="23">
    <citation type="journal article" date="2011" name="J. Virol.">
        <title>Mechanism of inhibition of retrovirus release from cells by interferon-induced gene ISG15.</title>
        <authorList>
            <person name="Kuang Z."/>
            <person name="Seo E.J."/>
            <person name="Leis J."/>
        </authorList>
    </citation>
    <scope>INTERACTION WITH CHMP1B; CHMP2A; CHMP3; CHMP4B AND CHMP6</scope>
</reference>
<reference key="24">
    <citation type="journal article" date="2012" name="Nat. Cell Biol.">
        <title>Syndecan-syntenin-ALIX regulates the biogenesis of exosomes.</title>
        <authorList>
            <person name="Baietti M.F."/>
            <person name="Zhang Z."/>
            <person name="Mortier E."/>
            <person name="Melchior A."/>
            <person name="Degeest G."/>
            <person name="Geeraerts A."/>
            <person name="Ivarsson Y."/>
            <person name="Depoortere F."/>
            <person name="Coomans C."/>
            <person name="Vermeiren E."/>
            <person name="Zimmermann P."/>
            <person name="David G."/>
        </authorList>
    </citation>
    <scope>FUNCTION</scope>
</reference>
<reference key="25">
    <citation type="journal article" date="2014" name="Nat. Cell Biol.">
        <title>ANCHR mediates Aurora-B-dependent abscission checkpoint control through retention of VPS4.</title>
        <authorList>
            <person name="Thoresen S.B."/>
            <person name="Campsteijn C."/>
            <person name="Vietri M."/>
            <person name="Schink K.O."/>
            <person name="Liestoel K."/>
            <person name="Andersen J.S."/>
            <person name="Raiborg C."/>
            <person name="Stenmark H."/>
        </authorList>
    </citation>
    <scope>FUNCTION</scope>
    <scope>SUBCELLULAR LOCATION</scope>
    <scope>INTERACTION WITH ZFYVE19</scope>
</reference>
<reference key="26">
    <citation type="journal article" date="2005" name="Proc. Natl. Acad. Sci. U.S.A.">
        <title>Structure and ESCRT-III protein interactions of the MIT domain of human VPS4A.</title>
        <authorList>
            <person name="Scott A."/>
            <person name="Gaspar J."/>
            <person name="Stuchell-Brereton M.D."/>
            <person name="Alam S.L."/>
            <person name="Skalicky J.J."/>
            <person name="Sundquist W.I."/>
        </authorList>
    </citation>
    <scope>STRUCTURE BY NMR OF 1-77</scope>
    <scope>INTERACTION WITH CHMP1B</scope>
    <scope>MUTAGENESIS OF LEU-64 AND GLU-68</scope>
</reference>
<reference key="27">
    <citation type="journal article" date="2007" name="Nature">
        <title>ESCRT-III recognition by VPS4 ATPases.</title>
        <authorList>
            <person name="Stuchell-Brereton M.D."/>
            <person name="Skalicky J.J."/>
            <person name="Kieffer C."/>
            <person name="Karren M.A."/>
            <person name="Ghaffarian S."/>
            <person name="Sundquist W.I."/>
        </authorList>
    </citation>
    <scope>STRUCTURE BY NMR OF 1-84 IN COMPLEX WITH CHMP1A</scope>
    <scope>INTERACTION WITH CHMP2B</scope>
    <scope>MUTAGENESIS OF LEU-64 AND LYS-173</scope>
</reference>
<reference key="28">
    <citation type="journal article" date="2008" name="Dev. Cell">
        <title>Two distinct modes of ESCRT-III recognition are required for VPS4 functions in lysosomal protein targeting and HIV-1 budding.</title>
        <authorList>
            <person name="Kieffer C."/>
            <person name="Skalicky J.J."/>
            <person name="Morita E."/>
            <person name="De Domenico I."/>
            <person name="Ward D.M."/>
            <person name="Kaplan J."/>
            <person name="Sundquist W.I."/>
        </authorList>
    </citation>
    <scope>STRUCTURE BY NMR OF 1-84 IN COMPLEX WITH CHMP6</scope>
    <scope>INTERACTION WITH CHMP1A</scope>
    <scope>MUTAGENESIS OF VAL-13; LEU-64 AND LYS-173</scope>
</reference>
<reference key="29">
    <citation type="journal article" date="2014" name="PLoS Genet.">
        <title>De novo mutations in moderate or severe intellectual disability.</title>
        <authorList>
            <person name="Hamdan F.F."/>
            <person name="Srour M."/>
            <person name="Capo-Chichi J.M."/>
            <person name="Daoud H."/>
            <person name="Nassif C."/>
            <person name="Patry L."/>
            <person name="Massicotte C."/>
            <person name="Ambalavanan A."/>
            <person name="Spiegelman D."/>
            <person name="Diallo O."/>
            <person name="Henrion E."/>
            <person name="Dionne-Laporte A."/>
            <person name="Fougerat A."/>
            <person name="Pshezhetsky A.V."/>
            <person name="Venkateswaran S."/>
            <person name="Rouleau G.A."/>
            <person name="Michaud J.L."/>
        </authorList>
    </citation>
    <scope>VARIANT SER-193 DEL</scope>
</reference>
<reference key="30">
    <citation type="journal article" date="2020" name="Am. J. Hum. Genet.">
        <title>De Novo VPS4A mutations cause multisystem disease with abnormal neurodevelopment.</title>
        <authorList>
            <consortium name="Genomics England Research Consortium"/>
            <person name="Rodger C."/>
            <person name="Flex E."/>
            <person name="Allison R.J."/>
            <person name="Sanchis-Juan A."/>
            <person name="Hasenahuer M.A."/>
            <person name="Cecchetti S."/>
            <person name="French C.E."/>
            <person name="Edgar J.R."/>
            <person name="Carpentieri G."/>
            <person name="Ciolfi A."/>
            <person name="Pantaleoni F."/>
            <person name="Bruselles A."/>
            <person name="Onesimo R."/>
            <person name="Zampino G."/>
            <person name="Marcon F."/>
            <person name="Siniscalchi E."/>
            <person name="Lees M."/>
            <person name="Krishnakumar D."/>
            <person name="McCann E."/>
            <person name="Yosifova D."/>
            <person name="Jarvis J."/>
            <person name="Kruer M.C."/>
            <person name="Marks W."/>
            <person name="Campbell J."/>
            <person name="Allen L.E."/>
            <person name="Gustincich S."/>
            <person name="Raymond F.L."/>
            <person name="Tartaglia M."/>
            <person name="Reid E."/>
        </authorList>
    </citation>
    <scope>VARIANTS CIMDAG LYS-206; GLY-284 AND TRP-284</scope>
    <scope>CHARACTERIZATION OF VARIANTS CIMDAG GLY-284 AND TRP-284</scope>
    <scope>INVOLVEMENT IN CIMDAG</scope>
    <scope>VARIANTS PRO-168 DEL AND VAL-337</scope>
    <scope>FUNCTION</scope>
</reference>
<reference key="31">
    <citation type="journal article" date="2020" name="Am. J. Hum. Genet.">
        <title>VPS4A mutations in humans cause syndromic congenital dyserythropoietic anemia due to cytokinesis and trafficking defects.</title>
        <authorList>
            <person name="Seu K.G."/>
            <person name="Trump L.R."/>
            <person name="Emberesh S."/>
            <person name="Lorsbach R.B."/>
            <person name="Johnson C."/>
            <person name="Meznarich J."/>
            <person name="Underhill H.R."/>
            <person name="Chou S.T."/>
            <person name="Sakthivel H."/>
            <person name="Nassar N.N."/>
            <person name="Seu K.J."/>
            <person name="Blanc L."/>
            <person name="Zhang W."/>
            <person name="Lutzko C.M."/>
            <person name="Kalfa T.A."/>
        </authorList>
    </citation>
    <scope>VARIANTS CIMDAG VAL-28; GLU-203 AND TRP-284</scope>
    <scope>INVOLVEMENT IN CIMDAG</scope>
    <scope>FUNCTION</scope>
    <scope>SUBCELLULAR LOCATION</scope>
</reference>
<reference key="32">
    <citation type="journal article" date="2021" name="Am. J. Hematol.">
        <title>VPS4A mutation in syndromic congenital hemolytic anemia without obvious signs of dyserythropoiesis.</title>
        <authorList>
            <person name="Lunati A."/>
            <person name="Petit A."/>
            <person name="Lapillonne H."/>
            <person name="Gameiro C."/>
            <person name="Saillour V."/>
            <person name="Garel C."/>
            <person name="Doummar D."/>
            <person name="Qebibo L."/>
            <person name="Aissat A."/>
            <person name="Fanen P."/>
            <person name="Bartolucci P."/>
            <person name="Galacteros F."/>
            <person name="Funalot B."/>
            <person name="Burglen L."/>
            <person name="Mansour-Hendili L."/>
        </authorList>
    </citation>
    <scope>VARIANT CIMDAG TRP-284</scope>
</reference>
<feature type="chain" id="PRO_0000084765" description="Vacuolar protein sorting-associated protein 4A">
    <location>
        <begin position="1"/>
        <end position="437"/>
    </location>
</feature>
<feature type="domain" description="MIT">
    <location>
        <begin position="2"/>
        <end position="80"/>
    </location>
</feature>
<feature type="region of interest" description="Interaction with CHMP1B">
    <location>
        <begin position="1"/>
        <end position="84"/>
    </location>
</feature>
<feature type="region of interest" description="Disordered" evidence="6">
    <location>
        <begin position="75"/>
        <end position="106"/>
    </location>
</feature>
<feature type="compositionally biased region" description="Basic and acidic residues" evidence="6">
    <location>
        <begin position="84"/>
        <end position="96"/>
    </location>
</feature>
<feature type="binding site" evidence="28">
    <location>
        <begin position="167"/>
        <end position="174"/>
    </location>
    <ligand>
        <name>ATP</name>
        <dbReference type="ChEBI" id="CHEBI:30616"/>
    </ligand>
</feature>
<feature type="modified residue" description="N6-acetyllysine" evidence="35">
    <location>
        <position position="8"/>
    </location>
</feature>
<feature type="modified residue" description="Phosphoserine" evidence="3">
    <location>
        <position position="95"/>
    </location>
</feature>
<feature type="modified residue" description="Phosphoserine" evidence="3">
    <location>
        <position position="97"/>
    </location>
</feature>
<feature type="sequence variant" id="VAR_085594" description="In CIMDAG; uncertain significance; dbSNP:rs1965431981." evidence="25">
    <original>A</original>
    <variation>V</variation>
    <location>
        <position position="28"/>
    </location>
</feature>
<feature type="sequence variant" id="VAR_085595" description="Found in a patient with non-specific intellectual disability; uncertain significance." evidence="26">
    <location>
        <position position="168"/>
    </location>
</feature>
<feature type="sequence variant" id="VAR_078655" description="Found in a patient with a CIMDAG-like intellectual disability syndrome; uncertain significance." evidence="24">
    <location>
        <position position="193"/>
    </location>
</feature>
<feature type="sequence variant" id="VAR_085596" description="In CIMDAG; patient peripheral red blood cells show abnormal CD71 expression indicating defective endosomal trafficking; dbSNP:rs1965484288." evidence="25">
    <original>G</original>
    <variation>E</variation>
    <location>
        <position position="203"/>
    </location>
</feature>
<feature type="sequence variant" id="VAR_085597" description="In CIMDAG; dbSNP:rs1965484443." evidence="26">
    <original>E</original>
    <variation>K</variation>
    <location>
        <position position="206"/>
    </location>
</feature>
<feature type="sequence variant" id="VAR_085598" description="In CIMDAG; has a dominant negative effect on the regulation of endosomal size resulting in enlarged endosomal vacuoles; patient cells also have abnormal nuclear envelope morphology and primary cilium defects; no effect on protein abundance in patient cells; dbSNP:rs1965499910." evidence="26">
    <original>R</original>
    <variation>G</variation>
    <location>
        <position position="284"/>
    </location>
</feature>
<feature type="sequence variant" id="VAR_085599" description="In CIMDAG; has a dominant negative effect on the regulation of endosomal size resulting in enlarged endosomal vacuoles; patient cells also have abnormal nuclear envelope morphology and primary cilium defects; no effect on protein abundance in patient cells; patient-derived induced erythroblasts show defective cytokinesis; dbSNP:rs1965499910." evidence="25 26 27">
    <original>R</original>
    <variation>W</variation>
    <location>
        <position position="284"/>
    </location>
</feature>
<feature type="sequence variant" id="VAR_085600" description="Found in a patient with non-specific intellectual disability; uncertain significance." evidence="26">
    <original>I</original>
    <variation>V</variation>
    <location>
        <position position="337"/>
    </location>
</feature>
<feature type="mutagenesis site" description="Diminishes interaction with IST1." evidence="17 19">
    <original>V</original>
    <variation>A</variation>
    <variation>D</variation>
    <location>
        <position position="13"/>
    </location>
</feature>
<feature type="mutagenesis site" description="Abolishes interaction with CHMP6, no effect on interaction with CHMP1A." evidence="17 19">
    <original>V</original>
    <variation>D</variation>
    <location>
        <position position="13"/>
    </location>
</feature>
<feature type="mutagenesis site" description="Greatly diminishes localization to punctate class E compartments; when associated with Q-173." evidence="17 19">
    <original>V</original>
    <variation>D</variation>
    <location>
        <position position="13"/>
    </location>
</feature>
<feature type="mutagenesis site" description="Abolishes interaction with CHMP1B; diminishes interaction with IST1." evidence="14 16 17 19 20">
    <original>L</original>
    <variation>A</variation>
    <variation>D</variation>
    <location>
        <position position="64"/>
    </location>
</feature>
<feature type="mutagenesis site" description="Greatly diminishes localization to punctate class E compartments and partially restores HIV-1 release; when associated with Q-173." evidence="14 16 17 19 20">
    <original>L</original>
    <variation>D</variation>
    <location>
        <position position="64"/>
    </location>
</feature>
<feature type="mutagenesis site" description="Modestly reduces interaction with CHMP6." evidence="14 16 17 19 20">
    <original>L</original>
    <variation>D</variation>
    <location>
        <position position="64"/>
    </location>
</feature>
<feature type="mutagenesis site" description="Diminishes interaction with CHMP1B." evidence="14">
    <original>E</original>
    <variation>D</variation>
    <location>
        <position position="68"/>
    </location>
</feature>
<feature type="mutagenesis site" description="Defective in ATP-binding. Causes membrane association. Induces vacuolation of endosomal compartments and impairs cholesterol sorting. Inhibits HIV-1 release. Greatly diminishes localization to punctate class E compartments and partially restores HIV-1 release; when associated with D-64. Greatly diminishes localization to punctate class E compartments; when associated with D-173." evidence="7 10 16 17">
    <original>K</original>
    <variation>Q</variation>
    <location>
        <position position="173"/>
    </location>
</feature>
<feature type="mutagenesis site" description="Strongly impairs HIV-1 release." evidence="15">
    <original>WL</original>
    <variation>AA</variation>
    <location>
        <begin position="201"/>
        <end position="202"/>
    </location>
</feature>
<feature type="mutagenesis site" description="Impairs HIV-1 release." evidence="15">
    <original>G</original>
    <variation>A</variation>
    <location>
        <position position="203"/>
    </location>
</feature>
<feature type="mutagenesis site" description="Defective in ATP-hydrolysis. Causes membrane association. Induces vacuolation of endosomal compartments and impairs cholesterol and protein sorting. Inhibits HIV-1 release. Increases binding to CHMP1." evidence="7 8 9 10 13">
    <original>E</original>
    <variation>Q</variation>
    <location>
        <position position="228"/>
    </location>
</feature>
<feature type="sequence conflict" description="In Ref. 3; AAL75948 and 5; AAF17203." evidence="28" ref="3 5">
    <original>K</original>
    <variation>E</variation>
    <location>
        <position position="79"/>
    </location>
</feature>
<feature type="sequence conflict" description="In Ref. 3; AAL75948." evidence="28" ref="3">
    <original>N</original>
    <variation>T</variation>
    <location>
        <position position="185"/>
    </location>
</feature>
<feature type="sequence conflict" description="In Ref. 8; AAD42971." evidence="28" ref="8">
    <original>R</original>
    <variation>K</variation>
    <location>
        <position position="284"/>
    </location>
</feature>
<feature type="helix" evidence="36">
    <location>
        <begin position="5"/>
        <end position="21"/>
    </location>
</feature>
<feature type="helix" evidence="36">
    <location>
        <begin position="25"/>
        <end position="45"/>
    </location>
</feature>
<feature type="helix" evidence="36">
    <location>
        <begin position="50"/>
        <end position="76"/>
    </location>
</feature>
<evidence type="ECO:0000250" key="1"/>
<evidence type="ECO:0000250" key="2">
    <source>
        <dbReference type="UniProtKB" id="O75351"/>
    </source>
</evidence>
<evidence type="ECO:0000250" key="3">
    <source>
        <dbReference type="UniProtKB" id="Q793F9"/>
    </source>
</evidence>
<evidence type="ECO:0000250" key="4">
    <source>
        <dbReference type="UniProtKB" id="Q8VEJ9"/>
    </source>
</evidence>
<evidence type="ECO:0000255" key="5"/>
<evidence type="ECO:0000256" key="6">
    <source>
        <dbReference type="SAM" id="MobiDB-lite"/>
    </source>
</evidence>
<evidence type="ECO:0000269" key="7">
    <source>
    </source>
</evidence>
<evidence type="ECO:0000269" key="8">
    <source>
    </source>
</evidence>
<evidence type="ECO:0000269" key="9">
    <source>
    </source>
</evidence>
<evidence type="ECO:0000269" key="10">
    <source>
    </source>
</evidence>
<evidence type="ECO:0000269" key="11">
    <source>
    </source>
</evidence>
<evidence type="ECO:0000269" key="12">
    <source>
    </source>
</evidence>
<evidence type="ECO:0000269" key="13">
    <source>
    </source>
</evidence>
<evidence type="ECO:0000269" key="14">
    <source>
    </source>
</evidence>
<evidence type="ECO:0000269" key="15">
    <source>
    </source>
</evidence>
<evidence type="ECO:0000269" key="16">
    <source>
    </source>
</evidence>
<evidence type="ECO:0000269" key="17">
    <source>
    </source>
</evidence>
<evidence type="ECO:0000269" key="18">
    <source>
    </source>
</evidence>
<evidence type="ECO:0000269" key="19">
    <source>
    </source>
</evidence>
<evidence type="ECO:0000269" key="20">
    <source>
    </source>
</evidence>
<evidence type="ECO:0000269" key="21">
    <source>
    </source>
</evidence>
<evidence type="ECO:0000269" key="22">
    <source>
    </source>
</evidence>
<evidence type="ECO:0000269" key="23">
    <source>
    </source>
</evidence>
<evidence type="ECO:0000269" key="24">
    <source>
    </source>
</evidence>
<evidence type="ECO:0000269" key="25">
    <source>
    </source>
</evidence>
<evidence type="ECO:0000269" key="26">
    <source>
    </source>
</evidence>
<evidence type="ECO:0000269" key="27">
    <source>
    </source>
</evidence>
<evidence type="ECO:0000305" key="28"/>
<evidence type="ECO:0000312" key="29">
    <source>
        <dbReference type="EMBL" id="AAD42971.1"/>
    </source>
</evidence>
<evidence type="ECO:0000312" key="30">
    <source>
        <dbReference type="EMBL" id="AAF17203.1"/>
    </source>
</evidence>
<evidence type="ECO:0000312" key="31">
    <source>
        <dbReference type="EMBL" id="AAG01470.1"/>
    </source>
</evidence>
<evidence type="ECO:0000312" key="32">
    <source>
        <dbReference type="EMBL" id="AAH47932.1"/>
    </source>
</evidence>
<evidence type="ECO:0000312" key="33">
    <source>
        <dbReference type="EMBL" id="AAK52408.1"/>
    </source>
</evidence>
<evidence type="ECO:0000312" key="34">
    <source>
        <dbReference type="EMBL" id="AAL75948.1"/>
    </source>
</evidence>
<evidence type="ECO:0007744" key="35">
    <source>
    </source>
</evidence>
<evidence type="ECO:0007829" key="36">
    <source>
        <dbReference type="PDB" id="1YXR"/>
    </source>
</evidence>
<sequence>MTTSTLQKAIDLVTKATEEDKAKNYEEALRLYQHAVEYFLHAIKYEAHSDKAKESIRAKCVQYLDRAEKLKDYLRSKEKHGKKPVKENQSEGKGSDSDSEGDNPEKKKLQEQLMGAVVMEKPNIRWNDVAGLEGAKEALKEAVILPIKFPHLFTGKRTPWRGILLFGPPGTGKSYLAKAVATEANNSTFFSVSSSDLMSKWLGESEKLVKNLFELARQHKPSIIFIDEVDSLCGSRNENESEAARRIKTEFLVQMQGVGNNNDGTLVLGATNIPWVLDSAIRRRFEKRIYIPLPEEAARAQMFRLHLGSTPHNLTDANIHELARKTEGYSGADISIIVRDSLMQPVRKVQSATHFKKVCGPSRTNPSMMIDDLLTPCSPGDPGAMEMTWMDVPGDKLLEPVVCMSDMLRSLATTRPTVNADDLLKVKKFSEDFGQES</sequence>
<keyword id="KW-0002">3D-structure</keyword>
<keyword id="KW-0007">Acetylation</keyword>
<keyword id="KW-0067">ATP-binding</keyword>
<keyword id="KW-0898">Cataract</keyword>
<keyword id="KW-0131">Cell cycle</keyword>
<keyword id="KW-0132">Cell division</keyword>
<keyword id="KW-1055">Congenital dyserythropoietic anemia</keyword>
<keyword id="KW-0963">Cytoplasm</keyword>
<keyword id="KW-0206">Cytoskeleton</keyword>
<keyword id="KW-0225">Disease variant</keyword>
<keyword id="KW-0967">Endosome</keyword>
<keyword id="KW-0360">Hereditary hemolytic anemia</keyword>
<keyword id="KW-0378">Hydrolase</keyword>
<keyword id="KW-0991">Intellectual disability</keyword>
<keyword id="KW-0472">Membrane</keyword>
<keyword id="KW-0547">Nucleotide-binding</keyword>
<keyword id="KW-0597">Phosphoprotein</keyword>
<keyword id="KW-0653">Protein transport</keyword>
<keyword id="KW-1267">Proteomics identification</keyword>
<keyword id="KW-1185">Reference proteome</keyword>
<keyword id="KW-0813">Transport</keyword>
<name>VPS4A_HUMAN</name>
<organism>
    <name type="scientific">Homo sapiens</name>
    <name type="common">Human</name>
    <dbReference type="NCBI Taxonomy" id="9606"/>
    <lineage>
        <taxon>Eukaryota</taxon>
        <taxon>Metazoa</taxon>
        <taxon>Chordata</taxon>
        <taxon>Craniata</taxon>
        <taxon>Vertebrata</taxon>
        <taxon>Euteleostomi</taxon>
        <taxon>Mammalia</taxon>
        <taxon>Eutheria</taxon>
        <taxon>Euarchontoglires</taxon>
        <taxon>Primates</taxon>
        <taxon>Haplorrhini</taxon>
        <taxon>Catarrhini</taxon>
        <taxon>Hominidae</taxon>
        <taxon>Homo</taxon>
    </lineage>
</organism>
<protein>
    <recommendedName>
        <fullName evidence="28">Vacuolar protein sorting-associated protein 4A</fullName>
        <ecNumber evidence="2">3.6.4.6</ecNumber>
    </recommendedName>
    <alternativeName>
        <fullName>Protein SKD2</fullName>
    </alternativeName>
    <alternativeName>
        <fullName>VPS4-1</fullName>
        <shortName>hVPS4</shortName>
    </alternativeName>
</protein>
<proteinExistence type="evidence at protein level"/>
<dbReference type="EC" id="3.6.4.6" evidence="2"/>
<dbReference type="EMBL" id="AF255952">
    <property type="protein sequence ID" value="AAK52408.1"/>
    <property type="molecule type" value="mRNA"/>
</dbReference>
<dbReference type="EMBL" id="AF282903">
    <property type="protein sequence ID" value="AAG01470.1"/>
    <property type="molecule type" value="Genomic_DNA"/>
</dbReference>
<dbReference type="EMBL" id="AF132747">
    <property type="protein sequence ID" value="AAL75948.1"/>
    <property type="status" value="ALT_FRAME"/>
    <property type="molecule type" value="mRNA"/>
</dbReference>
<dbReference type="EMBL" id="AF159063">
    <property type="protein sequence ID" value="AAD49227.1"/>
    <property type="molecule type" value="mRNA"/>
</dbReference>
<dbReference type="EMBL" id="AF112215">
    <property type="protein sequence ID" value="AAF17203.1"/>
    <property type="molecule type" value="mRNA"/>
</dbReference>
<dbReference type="EMBL" id="AK315026">
    <property type="protein sequence ID" value="BAG37514.1"/>
    <property type="molecule type" value="mRNA"/>
</dbReference>
<dbReference type="EMBL" id="CH471092">
    <property type="protein sequence ID" value="EAW83263.1"/>
    <property type="molecule type" value="Genomic_DNA"/>
</dbReference>
<dbReference type="EMBL" id="BC047932">
    <property type="protein sequence ID" value="AAH47932.1"/>
    <property type="molecule type" value="mRNA"/>
</dbReference>
<dbReference type="EMBL" id="AF155740">
    <property type="protein sequence ID" value="AAD42971.1"/>
    <property type="molecule type" value="mRNA"/>
</dbReference>
<dbReference type="CCDS" id="CCDS45517.1"/>
<dbReference type="RefSeq" id="NP_037377.1">
    <property type="nucleotide sequence ID" value="NM_013245.3"/>
</dbReference>
<dbReference type="PDB" id="1YXR">
    <property type="method" value="NMR"/>
    <property type="chains" value="A=1-77"/>
</dbReference>
<dbReference type="PDB" id="2JQ9">
    <property type="method" value="NMR"/>
    <property type="chains" value="A=1-84"/>
</dbReference>
<dbReference type="PDB" id="2K3W">
    <property type="method" value="NMR"/>
    <property type="chains" value="A=1-84"/>
</dbReference>
<dbReference type="PDBsum" id="1YXR"/>
<dbReference type="PDBsum" id="2JQ9"/>
<dbReference type="PDBsum" id="2K3W"/>
<dbReference type="BMRB" id="Q9UN37"/>
<dbReference type="SMR" id="Q9UN37"/>
<dbReference type="BioGRID" id="118059">
    <property type="interactions" value="97"/>
</dbReference>
<dbReference type="ComplexPortal" id="CPX-338">
    <property type="entry name" value="VPS4A/B complex"/>
</dbReference>
<dbReference type="DIP" id="DIP-44585N"/>
<dbReference type="FunCoup" id="Q9UN37">
    <property type="interactions" value="2703"/>
</dbReference>
<dbReference type="IntAct" id="Q9UN37">
    <property type="interactions" value="45"/>
</dbReference>
<dbReference type="MINT" id="Q9UN37"/>
<dbReference type="STRING" id="9606.ENSP00000254950"/>
<dbReference type="GlyGen" id="Q9UN37">
    <property type="glycosylation" value="3 sites, 2 N-linked glycans (2 sites), 1 O-linked glycan (1 site)"/>
</dbReference>
<dbReference type="iPTMnet" id="Q9UN37"/>
<dbReference type="PhosphoSitePlus" id="Q9UN37"/>
<dbReference type="SwissPalm" id="Q9UN37"/>
<dbReference type="BioMuta" id="VPS4A"/>
<dbReference type="DMDM" id="62511240"/>
<dbReference type="jPOST" id="Q9UN37"/>
<dbReference type="MassIVE" id="Q9UN37"/>
<dbReference type="PaxDb" id="9606-ENSP00000254950"/>
<dbReference type="PeptideAtlas" id="Q9UN37"/>
<dbReference type="ProteomicsDB" id="85248"/>
<dbReference type="Pumba" id="Q9UN37"/>
<dbReference type="Antibodypedia" id="8035">
    <property type="antibodies" value="152 antibodies from 29 providers"/>
</dbReference>
<dbReference type="DNASU" id="27183"/>
<dbReference type="Ensembl" id="ENST00000254950.13">
    <property type="protein sequence ID" value="ENSP00000254950.11"/>
    <property type="gene ID" value="ENSG00000132612.17"/>
</dbReference>
<dbReference type="GeneID" id="27183"/>
<dbReference type="KEGG" id="hsa:27183"/>
<dbReference type="MANE-Select" id="ENST00000254950.13">
    <property type="protein sequence ID" value="ENSP00000254950.11"/>
    <property type="RefSeq nucleotide sequence ID" value="NM_013245.3"/>
    <property type="RefSeq protein sequence ID" value="NP_037377.1"/>
</dbReference>
<dbReference type="UCSC" id="uc002eww.4">
    <property type="organism name" value="human"/>
</dbReference>
<dbReference type="AGR" id="HGNC:13488"/>
<dbReference type="CTD" id="27183"/>
<dbReference type="DisGeNET" id="27183"/>
<dbReference type="GeneCards" id="VPS4A"/>
<dbReference type="HGNC" id="HGNC:13488">
    <property type="gene designation" value="VPS4A"/>
</dbReference>
<dbReference type="HPA" id="ENSG00000132612">
    <property type="expression patterns" value="Low tissue specificity"/>
</dbReference>
<dbReference type="MalaCards" id="VPS4A"/>
<dbReference type="MIM" id="609982">
    <property type="type" value="gene"/>
</dbReference>
<dbReference type="MIM" id="619273">
    <property type="type" value="phenotype"/>
</dbReference>
<dbReference type="neXtProt" id="NX_Q9UN37"/>
<dbReference type="OpenTargets" id="ENSG00000132612"/>
<dbReference type="Orphanet" id="603448">
    <property type="disease" value="Cerebellar hypoplasia-intellectual disability-congenital microcephaly-dystonia-anemia-growth retardation syndrome"/>
</dbReference>
<dbReference type="PharmGKB" id="PA38362"/>
<dbReference type="VEuPathDB" id="HostDB:ENSG00000132612"/>
<dbReference type="eggNOG" id="KOG0739">
    <property type="taxonomic scope" value="Eukaryota"/>
</dbReference>
<dbReference type="GeneTree" id="ENSGT00940000157319"/>
<dbReference type="HOGENOM" id="CLU_000688_21_2_1"/>
<dbReference type="InParanoid" id="Q9UN37"/>
<dbReference type="OMA" id="IEWTNEF"/>
<dbReference type="OrthoDB" id="29072at2759"/>
<dbReference type="PAN-GO" id="Q9UN37">
    <property type="GO annotations" value="2 GO annotations based on evolutionary models"/>
</dbReference>
<dbReference type="PhylomeDB" id="Q9UN37"/>
<dbReference type="TreeFam" id="TF105012"/>
<dbReference type="PathwayCommons" id="Q9UN37"/>
<dbReference type="Reactome" id="R-HSA-162588">
    <property type="pathway name" value="Budding and maturation of HIV virion"/>
</dbReference>
<dbReference type="Reactome" id="R-HSA-917729">
    <property type="pathway name" value="Endosomal Sorting Complex Required For Transport (ESCRT)"/>
</dbReference>
<dbReference type="Reactome" id="R-HSA-9610379">
    <property type="pathway name" value="HCMV Late Events"/>
</dbReference>
<dbReference type="Reactome" id="R-HSA-9668328">
    <property type="pathway name" value="Sealing of the nuclear envelope (NE) by ESCRT-III"/>
</dbReference>
<dbReference type="SignaLink" id="Q9UN37"/>
<dbReference type="SIGNOR" id="Q9UN37"/>
<dbReference type="BioGRID-ORCS" id="27183">
    <property type="hits" value="159 hits in 1155 CRISPR screens"/>
</dbReference>
<dbReference type="CD-CODE" id="FB4E32DD">
    <property type="entry name" value="Presynaptic clusters and postsynaptic densities"/>
</dbReference>
<dbReference type="ChiTaRS" id="VPS4A">
    <property type="organism name" value="human"/>
</dbReference>
<dbReference type="EvolutionaryTrace" id="Q9UN37"/>
<dbReference type="GeneWiki" id="VPS4A"/>
<dbReference type="GenomeRNAi" id="27183"/>
<dbReference type="Pharos" id="Q9UN37">
    <property type="development level" value="Tbio"/>
</dbReference>
<dbReference type="PRO" id="PR:Q9UN37"/>
<dbReference type="Proteomes" id="UP000005640">
    <property type="component" value="Chromosome 16"/>
</dbReference>
<dbReference type="RNAct" id="Q9UN37">
    <property type="molecule type" value="protein"/>
</dbReference>
<dbReference type="Bgee" id="ENSG00000132612">
    <property type="expression patterns" value="Expressed in gastrocnemius and 204 other cell types or tissues"/>
</dbReference>
<dbReference type="ExpressionAtlas" id="Q9UN37">
    <property type="expression patterns" value="baseline and differential"/>
</dbReference>
<dbReference type="GO" id="GO:1904949">
    <property type="term" value="C:ATPase complex"/>
    <property type="evidence" value="ECO:0000303"/>
    <property type="project" value="ComplexPortal"/>
</dbReference>
<dbReference type="GO" id="GO:0005813">
    <property type="term" value="C:centrosome"/>
    <property type="evidence" value="ECO:0000314"/>
    <property type="project" value="UniProtKB"/>
</dbReference>
<dbReference type="GO" id="GO:0005737">
    <property type="term" value="C:cytoplasm"/>
    <property type="evidence" value="ECO:0000314"/>
    <property type="project" value="UniProtKB"/>
</dbReference>
<dbReference type="GO" id="GO:0005829">
    <property type="term" value="C:cytosol"/>
    <property type="evidence" value="ECO:0000314"/>
    <property type="project" value="UniProtKB"/>
</dbReference>
<dbReference type="GO" id="GO:0005769">
    <property type="term" value="C:early endosome"/>
    <property type="evidence" value="ECO:0000314"/>
    <property type="project" value="UniProtKB"/>
</dbReference>
<dbReference type="GO" id="GO:0005768">
    <property type="term" value="C:endosome"/>
    <property type="evidence" value="ECO:0000314"/>
    <property type="project" value="UniProtKB"/>
</dbReference>
<dbReference type="GO" id="GO:0010008">
    <property type="term" value="C:endosome membrane"/>
    <property type="evidence" value="ECO:0000315"/>
    <property type="project" value="UniProtKB"/>
</dbReference>
<dbReference type="GO" id="GO:0070062">
    <property type="term" value="C:extracellular exosome"/>
    <property type="evidence" value="ECO:0007005"/>
    <property type="project" value="UniProtKB"/>
</dbReference>
<dbReference type="GO" id="GO:0090543">
    <property type="term" value="C:Flemming body"/>
    <property type="evidence" value="ECO:0000314"/>
    <property type="project" value="UniProtKB"/>
</dbReference>
<dbReference type="GO" id="GO:0005770">
    <property type="term" value="C:late endosome"/>
    <property type="evidence" value="ECO:0000314"/>
    <property type="project" value="UniProtKB"/>
</dbReference>
<dbReference type="GO" id="GO:0031902">
    <property type="term" value="C:late endosome membrane"/>
    <property type="evidence" value="ECO:0007669"/>
    <property type="project" value="UniProtKB-SubCell"/>
</dbReference>
<dbReference type="GO" id="GO:0005764">
    <property type="term" value="C:lysosome"/>
    <property type="evidence" value="ECO:0000314"/>
    <property type="project" value="UniProtKB"/>
</dbReference>
<dbReference type="GO" id="GO:0030496">
    <property type="term" value="C:midbody"/>
    <property type="evidence" value="ECO:0000314"/>
    <property type="project" value="UniProtKB"/>
</dbReference>
<dbReference type="GO" id="GO:0005643">
    <property type="term" value="C:nuclear pore"/>
    <property type="evidence" value="ECO:0000303"/>
    <property type="project" value="ComplexPortal"/>
</dbReference>
<dbReference type="GO" id="GO:0005634">
    <property type="term" value="C:nucleus"/>
    <property type="evidence" value="ECO:0000314"/>
    <property type="project" value="UniProtKB"/>
</dbReference>
<dbReference type="GO" id="GO:0048471">
    <property type="term" value="C:perinuclear region of cytoplasm"/>
    <property type="evidence" value="ECO:0000314"/>
    <property type="project" value="UniProtKB"/>
</dbReference>
<dbReference type="GO" id="GO:0005886">
    <property type="term" value="C:plasma membrane"/>
    <property type="evidence" value="ECO:0000314"/>
    <property type="project" value="UniProtKB"/>
</dbReference>
<dbReference type="GO" id="GO:0000922">
    <property type="term" value="C:spindle pole"/>
    <property type="evidence" value="ECO:0000314"/>
    <property type="project" value="UniProtKB"/>
</dbReference>
<dbReference type="GO" id="GO:0005774">
    <property type="term" value="C:vacuolar membrane"/>
    <property type="evidence" value="ECO:0000314"/>
    <property type="project" value="UniProtKB"/>
</dbReference>
<dbReference type="GO" id="GO:0005524">
    <property type="term" value="F:ATP binding"/>
    <property type="evidence" value="ECO:0000315"/>
    <property type="project" value="UniProtKB"/>
</dbReference>
<dbReference type="GO" id="GO:0016887">
    <property type="term" value="F:ATP hydrolysis activity"/>
    <property type="evidence" value="ECO:0000315"/>
    <property type="project" value="UniProtKB"/>
</dbReference>
<dbReference type="GO" id="GO:0140545">
    <property type="term" value="F:ATP-dependent protein disaggregase activity"/>
    <property type="evidence" value="ECO:0000303"/>
    <property type="project" value="ARUK-UCL"/>
</dbReference>
<dbReference type="GO" id="GO:0044877">
    <property type="term" value="F:protein-containing complex binding"/>
    <property type="evidence" value="ECO:0000353"/>
    <property type="project" value="UniProtKB"/>
</dbReference>
<dbReference type="GO" id="GO:0000916">
    <property type="term" value="P:actomyosin contractile ring contraction"/>
    <property type="evidence" value="ECO:0000304"/>
    <property type="project" value="ARUK-UCL"/>
</dbReference>
<dbReference type="GO" id="GO:0097352">
    <property type="term" value="P:autophagosome maturation"/>
    <property type="evidence" value="ECO:0000303"/>
    <property type="project" value="ComplexPortal"/>
</dbReference>
<dbReference type="GO" id="GO:0006914">
    <property type="term" value="P:autophagy"/>
    <property type="evidence" value="ECO:0000303"/>
    <property type="project" value="ComplexPortal"/>
</dbReference>
<dbReference type="GO" id="GO:0051301">
    <property type="term" value="P:cell division"/>
    <property type="evidence" value="ECO:0000314"/>
    <property type="project" value="UniProtKB"/>
</dbReference>
<dbReference type="GO" id="GO:0061640">
    <property type="term" value="P:cytoskeleton-dependent cytokinesis"/>
    <property type="evidence" value="ECO:0000304"/>
    <property type="project" value="ARUK-UCL"/>
</dbReference>
<dbReference type="GO" id="GO:0016197">
    <property type="term" value="P:endosomal transport"/>
    <property type="evidence" value="ECO:0000315"/>
    <property type="project" value="UniProtKB"/>
</dbReference>
<dbReference type="GO" id="GO:0034058">
    <property type="term" value="P:endosomal vesicle fusion"/>
    <property type="evidence" value="ECO:0000315"/>
    <property type="project" value="UniProtKB"/>
</dbReference>
<dbReference type="GO" id="GO:1904896">
    <property type="term" value="P:ESCRT complex disassembly"/>
    <property type="evidence" value="ECO:0000303"/>
    <property type="project" value="ParkinsonsUK-UCL"/>
</dbReference>
<dbReference type="GO" id="GO:1904903">
    <property type="term" value="P:ESCRT III complex disassembly"/>
    <property type="evidence" value="ECO:0000303"/>
    <property type="project" value="ParkinsonsUK-UCL"/>
</dbReference>
<dbReference type="GO" id="GO:0032367">
    <property type="term" value="P:intracellular cholesterol transport"/>
    <property type="evidence" value="ECO:0000315"/>
    <property type="project" value="UniProtKB"/>
</dbReference>
<dbReference type="GO" id="GO:0061738">
    <property type="term" value="P:late endosomal microautophagy"/>
    <property type="evidence" value="ECO:0000250"/>
    <property type="project" value="ParkinsonsUK-UCL"/>
</dbReference>
<dbReference type="GO" id="GO:0061764">
    <property type="term" value="P:late endosome to lysosome transport via multivesicular body sorting pathway"/>
    <property type="evidence" value="ECO:0000303"/>
    <property type="project" value="ComplexPortal"/>
</dbReference>
<dbReference type="GO" id="GO:0016236">
    <property type="term" value="P:macroautophagy"/>
    <property type="evidence" value="ECO:0000303"/>
    <property type="project" value="ParkinsonsUK-UCL"/>
</dbReference>
<dbReference type="GO" id="GO:0090148">
    <property type="term" value="P:membrane fission"/>
    <property type="evidence" value="ECO:0000303"/>
    <property type="project" value="ComplexPortal"/>
</dbReference>
<dbReference type="GO" id="GO:0061952">
    <property type="term" value="P:midbody abscission"/>
    <property type="evidence" value="ECO:0000315"/>
    <property type="project" value="UniProtKB"/>
</dbReference>
<dbReference type="GO" id="GO:0044878">
    <property type="term" value="P:mitotic cytokinesis checkpoint signaling"/>
    <property type="evidence" value="ECO:0000315"/>
    <property type="project" value="UniProtKB"/>
</dbReference>
<dbReference type="GO" id="GO:0007080">
    <property type="term" value="P:mitotic metaphase chromosome alignment"/>
    <property type="evidence" value="ECO:0000315"/>
    <property type="project" value="UniProtKB"/>
</dbReference>
<dbReference type="GO" id="GO:0007084">
    <property type="term" value="P:mitotic nuclear membrane reassembly"/>
    <property type="evidence" value="ECO:0000304"/>
    <property type="project" value="Reactome"/>
</dbReference>
<dbReference type="GO" id="GO:0036258">
    <property type="term" value="P:multivesicular body assembly"/>
    <property type="evidence" value="ECO:0000250"/>
    <property type="project" value="ParkinsonsUK-UCL"/>
</dbReference>
<dbReference type="GO" id="GO:0071985">
    <property type="term" value="P:multivesicular body sorting pathway"/>
    <property type="evidence" value="ECO:0000303"/>
    <property type="project" value="ComplexPortal"/>
</dbReference>
<dbReference type="GO" id="GO:0032466">
    <property type="term" value="P:negative regulation of cytokinesis"/>
    <property type="evidence" value="ECO:0000315"/>
    <property type="project" value="UniProtKB"/>
</dbReference>
<dbReference type="GO" id="GO:0006998">
    <property type="term" value="P:nuclear envelope organization"/>
    <property type="evidence" value="ECO:0000304"/>
    <property type="project" value="ARUK-UCL"/>
</dbReference>
<dbReference type="GO" id="GO:0031468">
    <property type="term" value="P:nuclear membrane reassembly"/>
    <property type="evidence" value="ECO:0000304"/>
    <property type="project" value="ARUK-UCL"/>
</dbReference>
<dbReference type="GO" id="GO:0006997">
    <property type="term" value="P:nucleus organization"/>
    <property type="evidence" value="ECO:0000315"/>
    <property type="project" value="UniProtKB"/>
</dbReference>
<dbReference type="GO" id="GO:0001778">
    <property type="term" value="P:plasma membrane repair"/>
    <property type="evidence" value="ECO:0000303"/>
    <property type="project" value="ComplexPortal"/>
</dbReference>
<dbReference type="GO" id="GO:1903543">
    <property type="term" value="P:positive regulation of exosomal secretion"/>
    <property type="evidence" value="ECO:0000315"/>
    <property type="project" value="UniProtKB"/>
</dbReference>
<dbReference type="GO" id="GO:1903774">
    <property type="term" value="P:positive regulation of viral budding via host ESCRT complex"/>
    <property type="evidence" value="ECO:0000315"/>
    <property type="project" value="UniProtKB"/>
</dbReference>
<dbReference type="GO" id="GO:0006622">
    <property type="term" value="P:protein targeting to lysosome"/>
    <property type="evidence" value="ECO:0000315"/>
    <property type="project" value="UniProtKB"/>
</dbReference>
<dbReference type="GO" id="GO:0032880">
    <property type="term" value="P:regulation of protein localization"/>
    <property type="evidence" value="ECO:0000315"/>
    <property type="project" value="UniProtKB"/>
</dbReference>
<dbReference type="GO" id="GO:1903076">
    <property type="term" value="P:regulation of protein localization to plasma membrane"/>
    <property type="evidence" value="ECO:0000315"/>
    <property type="project" value="UniProtKB"/>
</dbReference>
<dbReference type="GO" id="GO:0043162">
    <property type="term" value="P:ubiquitin-dependent protein catabolic process via the multivesicular body sorting pathway"/>
    <property type="evidence" value="ECO:0000315"/>
    <property type="project" value="UniProtKB"/>
</dbReference>
<dbReference type="GO" id="GO:0090611">
    <property type="term" value="P:ubiquitin-independent protein catabolic process via the multivesicular body sorting pathway"/>
    <property type="evidence" value="ECO:0000315"/>
    <property type="project" value="UniProtKB"/>
</dbReference>
<dbReference type="GO" id="GO:0007033">
    <property type="term" value="P:vacuole organization"/>
    <property type="evidence" value="ECO:0000318"/>
    <property type="project" value="GO_Central"/>
</dbReference>
<dbReference type="GO" id="GO:0006900">
    <property type="term" value="P:vesicle budding from membrane"/>
    <property type="evidence" value="ECO:0000315"/>
    <property type="project" value="UniProtKB"/>
</dbReference>
<dbReference type="GO" id="GO:0072319">
    <property type="term" value="P:vesicle uncoating"/>
    <property type="evidence" value="ECO:0000315"/>
    <property type="project" value="UniProtKB"/>
</dbReference>
<dbReference type="GO" id="GO:0016192">
    <property type="term" value="P:vesicle-mediated transport"/>
    <property type="evidence" value="ECO:0000314"/>
    <property type="project" value="UniProtKB"/>
</dbReference>
<dbReference type="GO" id="GO:0046761">
    <property type="term" value="P:viral budding from plasma membrane"/>
    <property type="evidence" value="ECO:0000315"/>
    <property type="project" value="UniProtKB"/>
</dbReference>
<dbReference type="GO" id="GO:0039702">
    <property type="term" value="P:viral budding via host ESCRT complex"/>
    <property type="evidence" value="ECO:0000316"/>
    <property type="project" value="UniProtKB"/>
</dbReference>
<dbReference type="GO" id="GO:0019076">
    <property type="term" value="P:viral release from host cell"/>
    <property type="evidence" value="ECO:0000315"/>
    <property type="project" value="UniProtKB"/>
</dbReference>
<dbReference type="CDD" id="cd02678">
    <property type="entry name" value="MIT_VPS4"/>
    <property type="match status" value="1"/>
</dbReference>
<dbReference type="CDD" id="cd19521">
    <property type="entry name" value="RecA-like_VPS4"/>
    <property type="match status" value="1"/>
</dbReference>
<dbReference type="FunFam" id="3.40.50.300:FF:000043">
    <property type="entry name" value="Vacuolar protein sorting-associated protein 4"/>
    <property type="match status" value="1"/>
</dbReference>
<dbReference type="FunFam" id="1.20.58.80:FF:000002">
    <property type="entry name" value="Vacuolar protein sorting-associated protein 4A"/>
    <property type="match status" value="1"/>
</dbReference>
<dbReference type="FunFam" id="1.10.8.60:FF:000015">
    <property type="entry name" value="vacuolar protein sorting-associated protein 4A"/>
    <property type="match status" value="1"/>
</dbReference>
<dbReference type="Gene3D" id="1.10.8.60">
    <property type="match status" value="1"/>
</dbReference>
<dbReference type="Gene3D" id="3.40.50.300">
    <property type="entry name" value="P-loop containing nucleotide triphosphate hydrolases"/>
    <property type="match status" value="1"/>
</dbReference>
<dbReference type="Gene3D" id="1.20.58.80">
    <property type="entry name" value="Phosphotransferase system, lactose/cellobiose-type IIA subunit"/>
    <property type="match status" value="1"/>
</dbReference>
<dbReference type="IDEAL" id="IID00334"/>
<dbReference type="InterPro" id="IPR003593">
    <property type="entry name" value="AAA+_ATPase"/>
</dbReference>
<dbReference type="InterPro" id="IPR041569">
    <property type="entry name" value="AAA_lid_3"/>
</dbReference>
<dbReference type="InterPro" id="IPR003959">
    <property type="entry name" value="ATPase_AAA_core"/>
</dbReference>
<dbReference type="InterPro" id="IPR003960">
    <property type="entry name" value="ATPase_AAA_CS"/>
</dbReference>
<dbReference type="InterPro" id="IPR007330">
    <property type="entry name" value="MIT_dom"/>
</dbReference>
<dbReference type="InterPro" id="IPR036181">
    <property type="entry name" value="MIT_dom_sf"/>
</dbReference>
<dbReference type="InterPro" id="IPR050304">
    <property type="entry name" value="MT-severing_AAA_ATPase"/>
</dbReference>
<dbReference type="InterPro" id="IPR027417">
    <property type="entry name" value="P-loop_NTPase"/>
</dbReference>
<dbReference type="InterPro" id="IPR015415">
    <property type="entry name" value="Spast_Vps4_C"/>
</dbReference>
<dbReference type="InterPro" id="IPR045253">
    <property type="entry name" value="VPS4_MIT"/>
</dbReference>
<dbReference type="PANTHER" id="PTHR23074">
    <property type="entry name" value="AAA DOMAIN-CONTAINING"/>
    <property type="match status" value="1"/>
</dbReference>
<dbReference type="PANTHER" id="PTHR23074:SF83">
    <property type="entry name" value="VACUOLAR PROTEIN SORTING-ASSOCIATED PROTEIN 4A"/>
    <property type="match status" value="1"/>
</dbReference>
<dbReference type="Pfam" id="PF00004">
    <property type="entry name" value="AAA"/>
    <property type="match status" value="1"/>
</dbReference>
<dbReference type="Pfam" id="PF17862">
    <property type="entry name" value="AAA_lid_3"/>
    <property type="match status" value="1"/>
</dbReference>
<dbReference type="Pfam" id="PF04212">
    <property type="entry name" value="MIT"/>
    <property type="match status" value="1"/>
</dbReference>
<dbReference type="Pfam" id="PF09336">
    <property type="entry name" value="Vps4_C"/>
    <property type="match status" value="1"/>
</dbReference>
<dbReference type="SMART" id="SM00382">
    <property type="entry name" value="AAA"/>
    <property type="match status" value="1"/>
</dbReference>
<dbReference type="SMART" id="SM00745">
    <property type="entry name" value="MIT"/>
    <property type="match status" value="1"/>
</dbReference>
<dbReference type="SUPFAM" id="SSF116846">
    <property type="entry name" value="MIT domain"/>
    <property type="match status" value="1"/>
</dbReference>
<dbReference type="SUPFAM" id="SSF52540">
    <property type="entry name" value="P-loop containing nucleoside triphosphate hydrolases"/>
    <property type="match status" value="1"/>
</dbReference>
<dbReference type="PROSITE" id="PS00674">
    <property type="entry name" value="AAA"/>
    <property type="match status" value="1"/>
</dbReference>
<gene>
    <name evidence="31" type="primary">VPS4A</name>
    <name evidence="29" type="synonym">VPS4</name>
</gene>
<accession>Q9UN37</accession>
<accession>B2RCB7</accession>
<accession>Q8TF07</accession>
<accession>Q9UI03</accession>
<accession>Q9Y582</accession>